<feature type="chain" id="PRO_0000329139" description="Putative transport protein ESA_02488">
    <location>
        <begin position="1"/>
        <end position="560"/>
    </location>
</feature>
<feature type="transmembrane region" description="Helical" evidence="1">
    <location>
        <begin position="8"/>
        <end position="28"/>
    </location>
</feature>
<feature type="transmembrane region" description="Helical" evidence="1">
    <location>
        <begin position="32"/>
        <end position="52"/>
    </location>
</feature>
<feature type="transmembrane region" description="Helical" evidence="1">
    <location>
        <begin position="66"/>
        <end position="86"/>
    </location>
</feature>
<feature type="transmembrane region" description="Helical" evidence="1">
    <location>
        <begin position="91"/>
        <end position="111"/>
    </location>
</feature>
<feature type="transmembrane region" description="Helical" evidence="1">
    <location>
        <begin position="158"/>
        <end position="178"/>
    </location>
</feature>
<feature type="transmembrane region" description="Helical" evidence="1">
    <location>
        <begin position="383"/>
        <end position="403"/>
    </location>
</feature>
<feature type="transmembrane region" description="Helical" evidence="1">
    <location>
        <begin position="406"/>
        <end position="426"/>
    </location>
</feature>
<feature type="transmembrane region" description="Helical" evidence="1">
    <location>
        <begin position="447"/>
        <end position="467"/>
    </location>
</feature>
<feature type="transmembrane region" description="Helical" evidence="1">
    <location>
        <begin position="475"/>
        <end position="495"/>
    </location>
</feature>
<feature type="transmembrane region" description="Helical" evidence="1">
    <location>
        <begin position="539"/>
        <end position="559"/>
    </location>
</feature>
<feature type="domain" description="RCK C-terminal 1" evidence="1">
    <location>
        <begin position="200"/>
        <end position="288"/>
    </location>
</feature>
<feature type="domain" description="RCK C-terminal 2" evidence="1">
    <location>
        <begin position="292"/>
        <end position="373"/>
    </location>
</feature>
<keyword id="KW-1003">Cell membrane</keyword>
<keyword id="KW-0472">Membrane</keyword>
<keyword id="KW-1185">Reference proteome</keyword>
<keyword id="KW-0677">Repeat</keyword>
<keyword id="KW-0812">Transmembrane</keyword>
<keyword id="KW-1133">Transmembrane helix</keyword>
<keyword id="KW-0813">Transport</keyword>
<reference key="1">
    <citation type="journal article" date="2010" name="PLoS ONE">
        <title>Genome sequence of Cronobacter sakazakii BAA-894 and comparative genomic hybridization analysis with other Cronobacter species.</title>
        <authorList>
            <person name="Kucerova E."/>
            <person name="Clifton S.W."/>
            <person name="Xia X.Q."/>
            <person name="Long F."/>
            <person name="Porwollik S."/>
            <person name="Fulton L."/>
            <person name="Fronick C."/>
            <person name="Minx P."/>
            <person name="Kyung K."/>
            <person name="Warren W."/>
            <person name="Fulton R."/>
            <person name="Feng D."/>
            <person name="Wollam A."/>
            <person name="Shah N."/>
            <person name="Bhonagiri V."/>
            <person name="Nash W.E."/>
            <person name="Hallsworth-Pepin K."/>
            <person name="Wilson R.K."/>
            <person name="McClelland M."/>
            <person name="Forsythe S.J."/>
        </authorList>
    </citation>
    <scope>NUCLEOTIDE SEQUENCE [LARGE SCALE GENOMIC DNA]</scope>
    <source>
        <strain>ATCC BAA-894</strain>
    </source>
</reference>
<proteinExistence type="inferred from homology"/>
<dbReference type="EMBL" id="CP000783">
    <property type="protein sequence ID" value="ABU77734.1"/>
    <property type="molecule type" value="Genomic_DNA"/>
</dbReference>
<dbReference type="RefSeq" id="WP_004385782.1">
    <property type="nucleotide sequence ID" value="NC_009778.1"/>
</dbReference>
<dbReference type="SMR" id="A7MF23"/>
<dbReference type="KEGG" id="esa:ESA_02488"/>
<dbReference type="HOGENOM" id="CLU_035023_2_2_6"/>
<dbReference type="Proteomes" id="UP000000260">
    <property type="component" value="Chromosome"/>
</dbReference>
<dbReference type="GO" id="GO:0005886">
    <property type="term" value="C:plasma membrane"/>
    <property type="evidence" value="ECO:0007669"/>
    <property type="project" value="UniProtKB-SubCell"/>
</dbReference>
<dbReference type="GO" id="GO:0008324">
    <property type="term" value="F:monoatomic cation transmembrane transporter activity"/>
    <property type="evidence" value="ECO:0007669"/>
    <property type="project" value="InterPro"/>
</dbReference>
<dbReference type="GO" id="GO:0006813">
    <property type="term" value="P:potassium ion transport"/>
    <property type="evidence" value="ECO:0007669"/>
    <property type="project" value="InterPro"/>
</dbReference>
<dbReference type="FunFam" id="3.30.70.1450:FF:000003">
    <property type="entry name" value="Putative transport protein YbjL"/>
    <property type="match status" value="1"/>
</dbReference>
<dbReference type="Gene3D" id="3.30.70.1450">
    <property type="entry name" value="Regulator of K+ conductance, C-terminal domain"/>
    <property type="match status" value="2"/>
</dbReference>
<dbReference type="HAMAP" id="MF_01015">
    <property type="entry name" value="YbjL"/>
    <property type="match status" value="1"/>
</dbReference>
<dbReference type="InterPro" id="IPR050144">
    <property type="entry name" value="AAE_transporter"/>
</dbReference>
<dbReference type="InterPro" id="IPR006037">
    <property type="entry name" value="RCK_C"/>
</dbReference>
<dbReference type="InterPro" id="IPR036721">
    <property type="entry name" value="RCK_C_sf"/>
</dbReference>
<dbReference type="InterPro" id="IPR023017">
    <property type="entry name" value="Transp_YbjL_put"/>
</dbReference>
<dbReference type="InterPro" id="IPR006512">
    <property type="entry name" value="YidE_YbjL"/>
</dbReference>
<dbReference type="NCBIfam" id="NF003440">
    <property type="entry name" value="PRK04972.1"/>
    <property type="match status" value="1"/>
</dbReference>
<dbReference type="NCBIfam" id="TIGR01625">
    <property type="entry name" value="YidE_YbjL_dupl"/>
    <property type="match status" value="2"/>
</dbReference>
<dbReference type="PANTHER" id="PTHR30445">
    <property type="entry name" value="K(+)_H(+) ANTIPORTER SUBUNIT KHTT"/>
    <property type="match status" value="1"/>
</dbReference>
<dbReference type="PANTHER" id="PTHR30445:SF10">
    <property type="entry name" value="TRANSPORT PROTEIN YBJL-RELATED"/>
    <property type="match status" value="1"/>
</dbReference>
<dbReference type="Pfam" id="PF06826">
    <property type="entry name" value="Asp-Al_Ex"/>
    <property type="match status" value="2"/>
</dbReference>
<dbReference type="Pfam" id="PF02080">
    <property type="entry name" value="TrkA_C"/>
    <property type="match status" value="2"/>
</dbReference>
<dbReference type="SUPFAM" id="SSF116726">
    <property type="entry name" value="TrkA C-terminal domain-like"/>
    <property type="match status" value="2"/>
</dbReference>
<dbReference type="PROSITE" id="PS51202">
    <property type="entry name" value="RCK_C"/>
    <property type="match status" value="2"/>
</dbReference>
<gene>
    <name type="ordered locus">ESA_02488</name>
</gene>
<comment type="subcellular location">
    <subcellularLocation>
        <location evidence="1">Cell membrane</location>
        <topology evidence="1">Multi-pass membrane protein</topology>
    </subcellularLocation>
</comment>
<comment type="similarity">
    <text evidence="1">Belongs to the AAE transporter (TC 2.A.81) family. YbjL subfamily.</text>
</comment>
<organism>
    <name type="scientific">Cronobacter sakazakii (strain ATCC BAA-894)</name>
    <name type="common">Enterobacter sakazakii</name>
    <dbReference type="NCBI Taxonomy" id="290339"/>
    <lineage>
        <taxon>Bacteria</taxon>
        <taxon>Pseudomonadati</taxon>
        <taxon>Pseudomonadota</taxon>
        <taxon>Gammaproteobacteria</taxon>
        <taxon>Enterobacterales</taxon>
        <taxon>Enterobacteriaceae</taxon>
        <taxon>Cronobacter</taxon>
    </lineage>
</organism>
<protein>
    <recommendedName>
        <fullName evidence="1">Putative transport protein ESA_02488</fullName>
    </recommendedName>
</protein>
<accession>A7MF23</accession>
<evidence type="ECO:0000255" key="1">
    <source>
        <dbReference type="HAMAP-Rule" id="MF_01015"/>
    </source>
</evidence>
<sequence length="560" mass="60196">MNINVADLLNGNYILLLFVVLALGLCLGKLRLGSVQLGNSIGVLVVSLLLGQQHFSINTDALNLGFMLFIFCVGVEAGPNFFSIFFRDGKNYLMLALVMVGSALLIALGLGRAFGWDIGLTAGMLAGSMTSTPVLVGAGDTLRHAGMEGAQLAQALDHLSLGYALTYLIGLVSLIFGARYLPKLQHQDLQTSAQQIARERGLDTDANRKVYLPVIRAYRVGPELVAWADGKNLRELGIYRQTGCYIERIRRNGILASPDGDAVLQMGDEIALVGYPDAHARLDPSFRNGKEVFDRDLLDMRIVTEEIVVKNHNVVGRRLGQLKLTDHGCFLNRVIRSQIEMPIDDNIVLNKGDVLQVSGDARRVKTIADRIGFISIHSQVTDLLAFCAFFIVGLMIGMITFQFSSFSFGIGNAAGLLFAGIMLGFLRANHPTFGYIPQGALMMVKEFGLMVFMAGVGLSAGSGIGHGLGAVGGQMLFAGLIVSLLPVVICFLFGAYVLRMNRALLFGAMMGARTCAPAMEIISDTARSNIPALGYAGTYAIANVLLTLAGTLIVIIWPGT</sequence>
<name>Y2488_CROS8</name>